<name>CLPX_BRUSU</name>
<comment type="function">
    <text evidence="1">ATP-dependent specificity component of the Clp protease. It directs the protease to specific substrates. Can perform chaperone functions in the absence of ClpP.</text>
</comment>
<comment type="subunit">
    <text evidence="1">Component of the ClpX-ClpP complex. Forms a hexameric ring that, in the presence of ATP, binds to fourteen ClpP subunits assembled into a disk-like structure with a central cavity, resembling the structure of eukaryotic proteasomes.</text>
</comment>
<comment type="similarity">
    <text evidence="1">Belongs to the ClpX chaperone family.</text>
</comment>
<dbReference type="EMBL" id="AE014291">
    <property type="protein sequence ID" value="AAN30028.1"/>
    <property type="molecule type" value="Genomic_DNA"/>
</dbReference>
<dbReference type="EMBL" id="CP002997">
    <property type="protein sequence ID" value="AEM18446.1"/>
    <property type="molecule type" value="Genomic_DNA"/>
</dbReference>
<dbReference type="RefSeq" id="WP_006070841.1">
    <property type="nucleotide sequence ID" value="NZ_KN046804.1"/>
</dbReference>
<dbReference type="SMR" id="Q8G0I5"/>
<dbReference type="GeneID" id="45052153"/>
<dbReference type="KEGG" id="bms:BR1108"/>
<dbReference type="KEGG" id="bsi:BS1330_I1104"/>
<dbReference type="PATRIC" id="fig|204722.21.peg.2179"/>
<dbReference type="HOGENOM" id="CLU_014218_8_2_5"/>
<dbReference type="PhylomeDB" id="Q8G0I5"/>
<dbReference type="Proteomes" id="UP000007104">
    <property type="component" value="Chromosome I"/>
</dbReference>
<dbReference type="GO" id="GO:0009376">
    <property type="term" value="C:HslUV protease complex"/>
    <property type="evidence" value="ECO:0007669"/>
    <property type="project" value="TreeGrafter"/>
</dbReference>
<dbReference type="GO" id="GO:0005524">
    <property type="term" value="F:ATP binding"/>
    <property type="evidence" value="ECO:0007669"/>
    <property type="project" value="UniProtKB-UniRule"/>
</dbReference>
<dbReference type="GO" id="GO:0016887">
    <property type="term" value="F:ATP hydrolysis activity"/>
    <property type="evidence" value="ECO:0007669"/>
    <property type="project" value="InterPro"/>
</dbReference>
<dbReference type="GO" id="GO:0140662">
    <property type="term" value="F:ATP-dependent protein folding chaperone"/>
    <property type="evidence" value="ECO:0007669"/>
    <property type="project" value="InterPro"/>
</dbReference>
<dbReference type="GO" id="GO:0046983">
    <property type="term" value="F:protein dimerization activity"/>
    <property type="evidence" value="ECO:0007669"/>
    <property type="project" value="InterPro"/>
</dbReference>
<dbReference type="GO" id="GO:0051082">
    <property type="term" value="F:unfolded protein binding"/>
    <property type="evidence" value="ECO:0007669"/>
    <property type="project" value="UniProtKB-UniRule"/>
</dbReference>
<dbReference type="GO" id="GO:0008270">
    <property type="term" value="F:zinc ion binding"/>
    <property type="evidence" value="ECO:0007669"/>
    <property type="project" value="InterPro"/>
</dbReference>
<dbReference type="GO" id="GO:0051301">
    <property type="term" value="P:cell division"/>
    <property type="evidence" value="ECO:0007669"/>
    <property type="project" value="TreeGrafter"/>
</dbReference>
<dbReference type="GO" id="GO:0051603">
    <property type="term" value="P:proteolysis involved in protein catabolic process"/>
    <property type="evidence" value="ECO:0007669"/>
    <property type="project" value="TreeGrafter"/>
</dbReference>
<dbReference type="CDD" id="cd19497">
    <property type="entry name" value="RecA-like_ClpX"/>
    <property type="match status" value="1"/>
</dbReference>
<dbReference type="FunFam" id="1.10.8.60:FF:000002">
    <property type="entry name" value="ATP-dependent Clp protease ATP-binding subunit ClpX"/>
    <property type="match status" value="1"/>
</dbReference>
<dbReference type="FunFam" id="3.40.50.300:FF:000005">
    <property type="entry name" value="ATP-dependent Clp protease ATP-binding subunit ClpX"/>
    <property type="match status" value="1"/>
</dbReference>
<dbReference type="Gene3D" id="1.10.8.60">
    <property type="match status" value="1"/>
</dbReference>
<dbReference type="Gene3D" id="6.20.220.10">
    <property type="entry name" value="ClpX chaperone, C4-type zinc finger domain"/>
    <property type="match status" value="1"/>
</dbReference>
<dbReference type="Gene3D" id="3.40.50.300">
    <property type="entry name" value="P-loop containing nucleotide triphosphate hydrolases"/>
    <property type="match status" value="1"/>
</dbReference>
<dbReference type="HAMAP" id="MF_00175">
    <property type="entry name" value="ClpX"/>
    <property type="match status" value="1"/>
</dbReference>
<dbReference type="InterPro" id="IPR003593">
    <property type="entry name" value="AAA+_ATPase"/>
</dbReference>
<dbReference type="InterPro" id="IPR050052">
    <property type="entry name" value="ATP-dep_Clp_protease_ClpX"/>
</dbReference>
<dbReference type="InterPro" id="IPR003959">
    <property type="entry name" value="ATPase_AAA_core"/>
</dbReference>
<dbReference type="InterPro" id="IPR019489">
    <property type="entry name" value="Clp_ATPase_C"/>
</dbReference>
<dbReference type="InterPro" id="IPR004487">
    <property type="entry name" value="Clp_protease_ATP-bd_su_ClpX"/>
</dbReference>
<dbReference type="InterPro" id="IPR046425">
    <property type="entry name" value="ClpX_bact"/>
</dbReference>
<dbReference type="InterPro" id="IPR027417">
    <property type="entry name" value="P-loop_NTPase"/>
</dbReference>
<dbReference type="InterPro" id="IPR010603">
    <property type="entry name" value="Znf_CppX_C4"/>
</dbReference>
<dbReference type="InterPro" id="IPR038366">
    <property type="entry name" value="Znf_CppX_C4_sf"/>
</dbReference>
<dbReference type="NCBIfam" id="TIGR00382">
    <property type="entry name" value="clpX"/>
    <property type="match status" value="1"/>
</dbReference>
<dbReference type="NCBIfam" id="NF003745">
    <property type="entry name" value="PRK05342.1"/>
    <property type="match status" value="1"/>
</dbReference>
<dbReference type="PANTHER" id="PTHR48102:SF7">
    <property type="entry name" value="ATP-DEPENDENT CLP PROTEASE ATP-BINDING SUBUNIT CLPX-LIKE, MITOCHONDRIAL"/>
    <property type="match status" value="1"/>
</dbReference>
<dbReference type="PANTHER" id="PTHR48102">
    <property type="entry name" value="ATP-DEPENDENT CLP PROTEASE ATP-BINDING SUBUNIT CLPX-LIKE, MITOCHONDRIAL-RELATED"/>
    <property type="match status" value="1"/>
</dbReference>
<dbReference type="Pfam" id="PF07724">
    <property type="entry name" value="AAA_2"/>
    <property type="match status" value="1"/>
</dbReference>
<dbReference type="Pfam" id="PF10431">
    <property type="entry name" value="ClpB_D2-small"/>
    <property type="match status" value="1"/>
</dbReference>
<dbReference type="Pfam" id="PF06689">
    <property type="entry name" value="zf-C4_ClpX"/>
    <property type="match status" value="1"/>
</dbReference>
<dbReference type="SMART" id="SM00382">
    <property type="entry name" value="AAA"/>
    <property type="match status" value="1"/>
</dbReference>
<dbReference type="SMART" id="SM01086">
    <property type="entry name" value="ClpB_D2-small"/>
    <property type="match status" value="1"/>
</dbReference>
<dbReference type="SMART" id="SM00994">
    <property type="entry name" value="zf-C4_ClpX"/>
    <property type="match status" value="1"/>
</dbReference>
<dbReference type="SUPFAM" id="SSF57716">
    <property type="entry name" value="Glucocorticoid receptor-like (DNA-binding domain)"/>
    <property type="match status" value="1"/>
</dbReference>
<dbReference type="SUPFAM" id="SSF52540">
    <property type="entry name" value="P-loop containing nucleoside triphosphate hydrolases"/>
    <property type="match status" value="1"/>
</dbReference>
<dbReference type="PROSITE" id="PS51902">
    <property type="entry name" value="CLPX_ZB"/>
    <property type="match status" value="1"/>
</dbReference>
<reference key="1">
    <citation type="journal article" date="2002" name="Proc. Natl. Acad. Sci. U.S.A.">
        <title>The Brucella suis genome reveals fundamental similarities between animal and plant pathogens and symbionts.</title>
        <authorList>
            <person name="Paulsen I.T."/>
            <person name="Seshadri R."/>
            <person name="Nelson K.E."/>
            <person name="Eisen J.A."/>
            <person name="Heidelberg J.F."/>
            <person name="Read T.D."/>
            <person name="Dodson R.J."/>
            <person name="Umayam L.A."/>
            <person name="Brinkac L.M."/>
            <person name="Beanan M.J."/>
            <person name="Daugherty S.C."/>
            <person name="DeBoy R.T."/>
            <person name="Durkin A.S."/>
            <person name="Kolonay J.F."/>
            <person name="Madupu R."/>
            <person name="Nelson W.C."/>
            <person name="Ayodeji B."/>
            <person name="Kraul M."/>
            <person name="Shetty J."/>
            <person name="Malek J.A."/>
            <person name="Van Aken S.E."/>
            <person name="Riedmuller S."/>
            <person name="Tettelin H."/>
            <person name="Gill S.R."/>
            <person name="White O."/>
            <person name="Salzberg S.L."/>
            <person name="Hoover D.L."/>
            <person name="Lindler L.E."/>
            <person name="Halling S.M."/>
            <person name="Boyle S.M."/>
            <person name="Fraser C.M."/>
        </authorList>
    </citation>
    <scope>NUCLEOTIDE SEQUENCE [LARGE SCALE GENOMIC DNA]</scope>
    <source>
        <strain>1330</strain>
    </source>
</reference>
<reference key="2">
    <citation type="journal article" date="2011" name="J. Bacteriol.">
        <title>Revised genome sequence of Brucella suis 1330.</title>
        <authorList>
            <person name="Tae H."/>
            <person name="Shallom S."/>
            <person name="Settlage R."/>
            <person name="Preston D."/>
            <person name="Adams L.G."/>
            <person name="Garner H.R."/>
        </authorList>
    </citation>
    <scope>NUCLEOTIDE SEQUENCE [LARGE SCALE GENOMIC DNA]</scope>
    <source>
        <strain>1330</strain>
    </source>
</reference>
<proteinExistence type="inferred from homology"/>
<evidence type="ECO:0000255" key="1">
    <source>
        <dbReference type="HAMAP-Rule" id="MF_00175"/>
    </source>
</evidence>
<evidence type="ECO:0000255" key="2">
    <source>
        <dbReference type="PROSITE-ProRule" id="PRU01250"/>
    </source>
</evidence>
<sequence>MSKVSNGGGDSKNTLYCSFCGKSQHEVRKLIAGPTVFICDECVELCMDIIREENKSSMVKSREGVPTPQEIMAVLDDYVIGQKDAKRVLSVAVHNHYKRLAHQSKNSDIELAKSNILLVGPTGCGKTYLAQTLARIIDVPFIMADATTLTEAGYVGEDVENIILKLLQAADYNVERAQRGIVYIDEVDKISRKSDNPSITRDVSGEGVQQALLKIMEGTVASVPPQGGRKHPQQEFLQVDTTNILFICGGAFAGLDRIISARGEKTSIGFGATVKSVDERRIGEVFKELEPEDLLKFGLIPEFVGRLPVIATLEDLDVDALVQILTEPKNALVKQYQRLFDMENVELVFHDDALRAIANKAVEHKTGARGLRSIMEKILLDTMFELPTLEGVREVVISGDVVDGSARPLYIYAERQDEKGNVSA</sequence>
<feature type="chain" id="PRO_0000160327" description="ATP-dependent Clp protease ATP-binding subunit ClpX">
    <location>
        <begin position="1"/>
        <end position="424"/>
    </location>
</feature>
<feature type="domain" description="ClpX-type ZB" evidence="2">
    <location>
        <begin position="5"/>
        <end position="58"/>
    </location>
</feature>
<feature type="binding site" evidence="2">
    <location>
        <position position="17"/>
    </location>
    <ligand>
        <name>Zn(2+)</name>
        <dbReference type="ChEBI" id="CHEBI:29105"/>
    </ligand>
</feature>
<feature type="binding site" evidence="2">
    <location>
        <position position="20"/>
    </location>
    <ligand>
        <name>Zn(2+)</name>
        <dbReference type="ChEBI" id="CHEBI:29105"/>
    </ligand>
</feature>
<feature type="binding site" evidence="2">
    <location>
        <position position="39"/>
    </location>
    <ligand>
        <name>Zn(2+)</name>
        <dbReference type="ChEBI" id="CHEBI:29105"/>
    </ligand>
</feature>
<feature type="binding site" evidence="2">
    <location>
        <position position="42"/>
    </location>
    <ligand>
        <name>Zn(2+)</name>
        <dbReference type="ChEBI" id="CHEBI:29105"/>
    </ligand>
</feature>
<feature type="binding site" evidence="1">
    <location>
        <begin position="121"/>
        <end position="128"/>
    </location>
    <ligand>
        <name>ATP</name>
        <dbReference type="ChEBI" id="CHEBI:30616"/>
    </ligand>
</feature>
<organism>
    <name type="scientific">Brucella suis biovar 1 (strain 1330)</name>
    <dbReference type="NCBI Taxonomy" id="204722"/>
    <lineage>
        <taxon>Bacteria</taxon>
        <taxon>Pseudomonadati</taxon>
        <taxon>Pseudomonadota</taxon>
        <taxon>Alphaproteobacteria</taxon>
        <taxon>Hyphomicrobiales</taxon>
        <taxon>Brucellaceae</taxon>
        <taxon>Brucella/Ochrobactrum group</taxon>
        <taxon>Brucella</taxon>
    </lineage>
</organism>
<accession>Q8G0I5</accession>
<accession>G0KA30</accession>
<keyword id="KW-0067">ATP-binding</keyword>
<keyword id="KW-0143">Chaperone</keyword>
<keyword id="KW-0479">Metal-binding</keyword>
<keyword id="KW-0547">Nucleotide-binding</keyword>
<keyword id="KW-0862">Zinc</keyword>
<gene>
    <name evidence="1" type="primary">clpX</name>
    <name type="ordered locus">BR1108</name>
    <name type="ordered locus">BS1330_I1104</name>
</gene>
<protein>
    <recommendedName>
        <fullName evidence="1">ATP-dependent Clp protease ATP-binding subunit ClpX</fullName>
    </recommendedName>
</protein>